<protein>
    <recommendedName>
        <fullName evidence="1">Adenine phosphoribosyltransferase</fullName>
        <shortName evidence="1">APRT</shortName>
        <ecNumber evidence="1">2.4.2.7</ecNumber>
    </recommendedName>
</protein>
<comment type="function">
    <text evidence="1">Catalyzes a salvage reaction resulting in the formation of AMP, that is energically less costly than de novo synthesis.</text>
</comment>
<comment type="catalytic activity">
    <reaction evidence="1">
        <text>AMP + diphosphate = 5-phospho-alpha-D-ribose 1-diphosphate + adenine</text>
        <dbReference type="Rhea" id="RHEA:16609"/>
        <dbReference type="ChEBI" id="CHEBI:16708"/>
        <dbReference type="ChEBI" id="CHEBI:33019"/>
        <dbReference type="ChEBI" id="CHEBI:58017"/>
        <dbReference type="ChEBI" id="CHEBI:456215"/>
        <dbReference type="EC" id="2.4.2.7"/>
    </reaction>
</comment>
<comment type="pathway">
    <text evidence="1">Purine metabolism; AMP biosynthesis via salvage pathway; AMP from adenine: step 1/1.</text>
</comment>
<comment type="subunit">
    <text evidence="1">Homodimer.</text>
</comment>
<comment type="subcellular location">
    <subcellularLocation>
        <location evidence="1">Cytoplasm</location>
    </subcellularLocation>
</comment>
<comment type="similarity">
    <text evidence="1">Belongs to the purine/pyrimidine phosphoribosyltransferase family.</text>
</comment>
<feature type="chain" id="PRO_1000000285" description="Adenine phosphoribosyltransferase">
    <location>
        <begin position="1"/>
        <end position="175"/>
    </location>
</feature>
<organism>
    <name type="scientific">Francisella tularensis subsp. novicida (strain U112)</name>
    <dbReference type="NCBI Taxonomy" id="401614"/>
    <lineage>
        <taxon>Bacteria</taxon>
        <taxon>Pseudomonadati</taxon>
        <taxon>Pseudomonadota</taxon>
        <taxon>Gammaproteobacteria</taxon>
        <taxon>Thiotrichales</taxon>
        <taxon>Francisellaceae</taxon>
        <taxon>Francisella</taxon>
    </lineage>
</organism>
<accession>A0Q8C6</accession>
<sequence length="175" mass="18795">MNLDFIKSKIAAVPDFPKPGIMFRDITPLLADPQGLRKTAEAMAQELKNKGIQPTIVAGTESRGFIFGVALAEVLGLGFVPVRKPGKLPRATYSVKYDLEYGSDSLEIHQDAFKVTDEVLVVDDLLATGGTAKATVDLIEKTQAKVAGLIFVMELDGLGGREVLAGYNVSALIKF</sequence>
<proteinExistence type="inferred from homology"/>
<reference key="1">
    <citation type="journal article" date="2007" name="Genome Biol.">
        <title>Comparison of Francisella tularensis genomes reveals evolutionary events associated with the emergence of human pathogenic strains.</title>
        <authorList>
            <person name="Rohmer L."/>
            <person name="Fong C."/>
            <person name="Abmayr S."/>
            <person name="Wasnick M."/>
            <person name="Larson Freeman T.J."/>
            <person name="Radey M."/>
            <person name="Guina T."/>
            <person name="Svensson K."/>
            <person name="Hayden H.S."/>
            <person name="Jacobs M."/>
            <person name="Gallagher L.A."/>
            <person name="Manoil C."/>
            <person name="Ernst R.K."/>
            <person name="Drees B."/>
            <person name="Buckley D."/>
            <person name="Haugen E."/>
            <person name="Bovee D."/>
            <person name="Zhou Y."/>
            <person name="Chang J."/>
            <person name="Levy R."/>
            <person name="Lim R."/>
            <person name="Gillett W."/>
            <person name="Guenthener D."/>
            <person name="Kang A."/>
            <person name="Shaffer S.A."/>
            <person name="Taylor G."/>
            <person name="Chen J."/>
            <person name="Gallis B."/>
            <person name="D'Argenio D.A."/>
            <person name="Forsman M."/>
            <person name="Olson M.V."/>
            <person name="Goodlett D.R."/>
            <person name="Kaul R."/>
            <person name="Miller S.I."/>
            <person name="Brittnacher M.J."/>
        </authorList>
    </citation>
    <scope>NUCLEOTIDE SEQUENCE [LARGE SCALE GENOMIC DNA]</scope>
    <source>
        <strain>U112</strain>
    </source>
</reference>
<keyword id="KW-0963">Cytoplasm</keyword>
<keyword id="KW-0328">Glycosyltransferase</keyword>
<keyword id="KW-0660">Purine salvage</keyword>
<keyword id="KW-0808">Transferase</keyword>
<name>APT_FRATN</name>
<dbReference type="EC" id="2.4.2.7" evidence="1"/>
<dbReference type="EMBL" id="CP000439">
    <property type="protein sequence ID" value="ABK90491.1"/>
    <property type="molecule type" value="Genomic_DNA"/>
</dbReference>
<dbReference type="RefSeq" id="WP_003028608.1">
    <property type="nucleotide sequence ID" value="NZ_CP009633.1"/>
</dbReference>
<dbReference type="SMR" id="A0Q8C6"/>
<dbReference type="KEGG" id="ftn:FTN_1633"/>
<dbReference type="KEGG" id="ftx:AW25_356"/>
<dbReference type="BioCyc" id="FTUL401614:G1G75-1692-MONOMER"/>
<dbReference type="UniPathway" id="UPA00588">
    <property type="reaction ID" value="UER00646"/>
</dbReference>
<dbReference type="Proteomes" id="UP000000762">
    <property type="component" value="Chromosome"/>
</dbReference>
<dbReference type="GO" id="GO:0005737">
    <property type="term" value="C:cytoplasm"/>
    <property type="evidence" value="ECO:0007669"/>
    <property type="project" value="UniProtKB-SubCell"/>
</dbReference>
<dbReference type="GO" id="GO:0002055">
    <property type="term" value="F:adenine binding"/>
    <property type="evidence" value="ECO:0007669"/>
    <property type="project" value="TreeGrafter"/>
</dbReference>
<dbReference type="GO" id="GO:0003999">
    <property type="term" value="F:adenine phosphoribosyltransferase activity"/>
    <property type="evidence" value="ECO:0007669"/>
    <property type="project" value="UniProtKB-UniRule"/>
</dbReference>
<dbReference type="GO" id="GO:0016208">
    <property type="term" value="F:AMP binding"/>
    <property type="evidence" value="ECO:0007669"/>
    <property type="project" value="TreeGrafter"/>
</dbReference>
<dbReference type="GO" id="GO:0006168">
    <property type="term" value="P:adenine salvage"/>
    <property type="evidence" value="ECO:0007669"/>
    <property type="project" value="InterPro"/>
</dbReference>
<dbReference type="GO" id="GO:0044209">
    <property type="term" value="P:AMP salvage"/>
    <property type="evidence" value="ECO:0007669"/>
    <property type="project" value="UniProtKB-UniRule"/>
</dbReference>
<dbReference type="GO" id="GO:0006166">
    <property type="term" value="P:purine ribonucleoside salvage"/>
    <property type="evidence" value="ECO:0007669"/>
    <property type="project" value="UniProtKB-KW"/>
</dbReference>
<dbReference type="CDD" id="cd06223">
    <property type="entry name" value="PRTases_typeI"/>
    <property type="match status" value="1"/>
</dbReference>
<dbReference type="FunFam" id="3.40.50.2020:FF:000004">
    <property type="entry name" value="Adenine phosphoribosyltransferase"/>
    <property type="match status" value="1"/>
</dbReference>
<dbReference type="Gene3D" id="3.40.50.2020">
    <property type="match status" value="1"/>
</dbReference>
<dbReference type="HAMAP" id="MF_00004">
    <property type="entry name" value="Aden_phosphoribosyltr"/>
    <property type="match status" value="1"/>
</dbReference>
<dbReference type="InterPro" id="IPR005764">
    <property type="entry name" value="Ade_phspho_trans"/>
</dbReference>
<dbReference type="InterPro" id="IPR000836">
    <property type="entry name" value="PRibTrfase_dom"/>
</dbReference>
<dbReference type="InterPro" id="IPR029057">
    <property type="entry name" value="PRTase-like"/>
</dbReference>
<dbReference type="InterPro" id="IPR050054">
    <property type="entry name" value="UPRTase/APRTase"/>
</dbReference>
<dbReference type="NCBIfam" id="TIGR01090">
    <property type="entry name" value="apt"/>
    <property type="match status" value="1"/>
</dbReference>
<dbReference type="NCBIfam" id="NF002634">
    <property type="entry name" value="PRK02304.1-3"/>
    <property type="match status" value="1"/>
</dbReference>
<dbReference type="NCBIfam" id="NF002636">
    <property type="entry name" value="PRK02304.1-5"/>
    <property type="match status" value="1"/>
</dbReference>
<dbReference type="PANTHER" id="PTHR32315">
    <property type="entry name" value="ADENINE PHOSPHORIBOSYLTRANSFERASE"/>
    <property type="match status" value="1"/>
</dbReference>
<dbReference type="PANTHER" id="PTHR32315:SF3">
    <property type="entry name" value="ADENINE PHOSPHORIBOSYLTRANSFERASE"/>
    <property type="match status" value="1"/>
</dbReference>
<dbReference type="Pfam" id="PF00156">
    <property type="entry name" value="Pribosyltran"/>
    <property type="match status" value="1"/>
</dbReference>
<dbReference type="SUPFAM" id="SSF53271">
    <property type="entry name" value="PRTase-like"/>
    <property type="match status" value="1"/>
</dbReference>
<dbReference type="PROSITE" id="PS00103">
    <property type="entry name" value="PUR_PYR_PR_TRANSFER"/>
    <property type="match status" value="1"/>
</dbReference>
<gene>
    <name evidence="1" type="primary">apt</name>
    <name type="ordered locus">FTN_1633</name>
</gene>
<evidence type="ECO:0000255" key="1">
    <source>
        <dbReference type="HAMAP-Rule" id="MF_00004"/>
    </source>
</evidence>